<name>ADDB_LACP7</name>
<proteinExistence type="inferred from homology"/>
<comment type="function">
    <text evidence="1">The heterodimer acts as both an ATP-dependent DNA helicase and an ATP-dependent, dual-direction single-stranded exonuclease. Recognizes the chi site generating a DNA molecule suitable for the initiation of homologous recombination. The AddB subunit has 5' -&gt; 3' nuclease activity but not helicase activity.</text>
</comment>
<comment type="cofactor">
    <cofactor evidence="1">
        <name>Mg(2+)</name>
        <dbReference type="ChEBI" id="CHEBI:18420"/>
    </cofactor>
</comment>
<comment type="cofactor">
    <cofactor evidence="1">
        <name>[4Fe-4S] cluster</name>
        <dbReference type="ChEBI" id="CHEBI:49883"/>
    </cofactor>
    <text evidence="1">Binds 1 [4Fe-4S] cluster.</text>
</comment>
<comment type="subunit">
    <text evidence="1">Heterodimer of AddA and AddB.</text>
</comment>
<comment type="miscellaneous">
    <text evidence="1">Despite having conserved helicase domains, this subunit does not have helicase activity.</text>
</comment>
<comment type="similarity">
    <text evidence="1">Belongs to the helicase family. AddB/RexB type 1 subfamily.</text>
</comment>
<comment type="sequence caution" evidence="2">
    <conflict type="erroneous initiation">
        <sequence resource="EMBL-CDS" id="ABX43777"/>
    </conflict>
    <text>Extended N-terminus.</text>
</comment>
<organism>
    <name type="scientific">Lachnoclostridium phytofermentans (strain ATCC 700394 / DSM 18823 / ISDg)</name>
    <name type="common">Clostridium phytofermentans</name>
    <dbReference type="NCBI Taxonomy" id="357809"/>
    <lineage>
        <taxon>Bacteria</taxon>
        <taxon>Bacillati</taxon>
        <taxon>Bacillota</taxon>
        <taxon>Clostridia</taxon>
        <taxon>Lachnospirales</taxon>
        <taxon>Lachnospiraceae</taxon>
    </lineage>
</organism>
<accession>A9KTE7</accession>
<evidence type="ECO:0000255" key="1">
    <source>
        <dbReference type="HAMAP-Rule" id="MF_01452"/>
    </source>
</evidence>
<evidence type="ECO:0000305" key="2"/>
<protein>
    <recommendedName>
        <fullName evidence="1">ATP-dependent helicase/deoxyribonuclease subunit B</fullName>
        <ecNumber evidence="1">3.1.-.-</ecNumber>
    </recommendedName>
    <alternativeName>
        <fullName evidence="1">ATP-dependent helicase/nuclease subunit AddB</fullName>
    </alternativeName>
</protein>
<reference key="1">
    <citation type="submission" date="2007-11" db="EMBL/GenBank/DDBJ databases">
        <title>Complete genome sequence of Clostridium phytofermentans ISDg.</title>
        <authorList>
            <person name="Leschine S.B."/>
            <person name="Warnick T.A."/>
            <person name="Blanchard J.L."/>
            <person name="Schnell D.J."/>
            <person name="Petit E.L."/>
            <person name="LaTouf W.G."/>
            <person name="Copeland A."/>
            <person name="Lucas S."/>
            <person name="Lapidus A."/>
            <person name="Barry K."/>
            <person name="Glavina del Rio T."/>
            <person name="Dalin E."/>
            <person name="Tice H."/>
            <person name="Pitluck S."/>
            <person name="Kiss H."/>
            <person name="Brettin T."/>
            <person name="Bruce D."/>
            <person name="Detter J.C."/>
            <person name="Han C."/>
            <person name="Kuske C."/>
            <person name="Schmutz J."/>
            <person name="Larimer F."/>
            <person name="Land M."/>
            <person name="Hauser L."/>
            <person name="Kyrpides N."/>
            <person name="Kim E.A."/>
            <person name="Richardson P."/>
        </authorList>
    </citation>
    <scope>NUCLEOTIDE SEQUENCE [LARGE SCALE GENOMIC DNA]</scope>
    <source>
        <strain>ATCC 700394 / DSM 18823 / ISDg</strain>
    </source>
</reference>
<sequence>MSLQFVIGGSGAGKSYQLYQRVIESSLKEPKGKFLILVPEQFTLQTQKDLVTMHPKKGIHNIDILSFLRLAFRIFEETGGNDRLVLEDTGKSMIVKKVMMEKRNDLILFGANVKKQGFVEEMKSIISELAQYSIHTDELQKMKEVAKGKPLLNHKLTDIMTIYQAYEEFLQDKYINSEEILDLLCDVIDDSSFVNDSEICLDGFTGFTPSQYKLLSHLMKKAKSVTVTITMDESQINRKQEEHQLFYLSGKMAEKLTDLAITQKIEIKPPILVASENGGYSYRFHNSMALSALEKNIFRYPYKSFTEEQDDISITAAKDPMAEARHAVIEITRLLREEEYRYKDIAIVSGAMEVYGDIVKRELELAGIPCFVDHKKNILTNPVVEFLRSALDVVTHNFDYEAIFRFLKCGLTDFTMDEIDLFENYVIAFGIRGKYRYEHEWERKYKTNYEVDLEKINYVRECILKEFTPLYETLTSKKSSVRECVNALYNLLCTYHIEEKIHIFVEKFKAQGEKEDKLRAKEYEQIYRMVLEIFDRMVELLGEDVLPLKEFRDILDTGFREAKVGLIPPSIDQILVGDIERTRLKDIKALFFLGVNDGIVPKANPGGGILSDAERQLFADHEIELSPTKRQTAYLTEFYLYLNLTKPQNKLYLYYSKLDVSGKSIRASYLLGKISKIFPKLKIYDADRKSREDELLGTDQGLSYLISVLRDYEGEQPKLWREVYHLYVSGQIKGRISLDKVLQGVFYQNYEQGLTKEVARKLYGETLLGSVTRMEKYAACAFAHFLQYGLSLEERQEYKISMPDIGSLFHEALERFSKALKELDISWHELPEDVRISLGERCVREAVENFGNGILESSKRSAYLATRVERILQRTTKTLTHQLQQGVFEPGSYEQYFSHADRYLNLRGRIDRVDLYEQDGKLYVKVIDYKSGSTSFDLMNLYYGLQLQLGVYLSAAMELMKEQYPNHEIHPAGVFYYNLDDPIVTKSSSVEEDIEKKLAMNGLVNASKVVVPLLDTSFCGDEGELAPSTKSTVIPVETGKDGTFTKRSSVAKEEELITLTDYIKDLMHRFSEQIMEGKVRHNPYRAKNRNACTYCSFQSVCGFDCKVSGFSYRNLKTLNKEEVWNLIKKEDEFFGKDELDTGATEGN</sequence>
<keyword id="KW-0004">4Fe-4S</keyword>
<keyword id="KW-0067">ATP-binding</keyword>
<keyword id="KW-0227">DNA damage</keyword>
<keyword id="KW-0234">DNA repair</keyword>
<keyword id="KW-0238">DNA-binding</keyword>
<keyword id="KW-0269">Exonuclease</keyword>
<keyword id="KW-0347">Helicase</keyword>
<keyword id="KW-0378">Hydrolase</keyword>
<keyword id="KW-0408">Iron</keyword>
<keyword id="KW-0411">Iron-sulfur</keyword>
<keyword id="KW-0479">Metal-binding</keyword>
<keyword id="KW-0540">Nuclease</keyword>
<keyword id="KW-0547">Nucleotide-binding</keyword>
<keyword id="KW-1185">Reference proteome</keyword>
<dbReference type="EC" id="3.1.-.-" evidence="1"/>
<dbReference type="EMBL" id="CP000885">
    <property type="protein sequence ID" value="ABX43777.1"/>
    <property type="status" value="ALT_INIT"/>
    <property type="molecule type" value="Genomic_DNA"/>
</dbReference>
<dbReference type="RefSeq" id="WP_049762422.1">
    <property type="nucleotide sequence ID" value="NC_010001.1"/>
</dbReference>
<dbReference type="SMR" id="A9KTE7"/>
<dbReference type="STRING" id="357809.Cphy_3424"/>
<dbReference type="KEGG" id="cpy:Cphy_3424"/>
<dbReference type="eggNOG" id="COG3857">
    <property type="taxonomic scope" value="Bacteria"/>
</dbReference>
<dbReference type="HOGENOM" id="CLU_007838_0_0_9"/>
<dbReference type="OrthoDB" id="9758506at2"/>
<dbReference type="Proteomes" id="UP000000370">
    <property type="component" value="Chromosome"/>
</dbReference>
<dbReference type="GO" id="GO:0051539">
    <property type="term" value="F:4 iron, 4 sulfur cluster binding"/>
    <property type="evidence" value="ECO:0007669"/>
    <property type="project" value="UniProtKB-KW"/>
</dbReference>
<dbReference type="GO" id="GO:0008409">
    <property type="term" value="F:5'-3' exonuclease activity"/>
    <property type="evidence" value="ECO:0007669"/>
    <property type="project" value="UniProtKB-UniRule"/>
</dbReference>
<dbReference type="GO" id="GO:0005524">
    <property type="term" value="F:ATP binding"/>
    <property type="evidence" value="ECO:0007669"/>
    <property type="project" value="UniProtKB-UniRule"/>
</dbReference>
<dbReference type="GO" id="GO:0003690">
    <property type="term" value="F:double-stranded DNA binding"/>
    <property type="evidence" value="ECO:0007669"/>
    <property type="project" value="UniProtKB-UniRule"/>
</dbReference>
<dbReference type="GO" id="GO:0004386">
    <property type="term" value="F:helicase activity"/>
    <property type="evidence" value="ECO:0007669"/>
    <property type="project" value="UniProtKB-KW"/>
</dbReference>
<dbReference type="GO" id="GO:0046872">
    <property type="term" value="F:metal ion binding"/>
    <property type="evidence" value="ECO:0007669"/>
    <property type="project" value="UniProtKB-KW"/>
</dbReference>
<dbReference type="GO" id="GO:0000724">
    <property type="term" value="P:double-strand break repair via homologous recombination"/>
    <property type="evidence" value="ECO:0007669"/>
    <property type="project" value="UniProtKB-UniRule"/>
</dbReference>
<dbReference type="Gene3D" id="3.90.320.10">
    <property type="match status" value="1"/>
</dbReference>
<dbReference type="Gene3D" id="3.40.50.300">
    <property type="entry name" value="P-loop containing nucleotide triphosphate hydrolases"/>
    <property type="match status" value="4"/>
</dbReference>
<dbReference type="HAMAP" id="MF_01452">
    <property type="entry name" value="AddB_type1"/>
    <property type="match status" value="1"/>
</dbReference>
<dbReference type="InterPro" id="IPR049035">
    <property type="entry name" value="ADDB_N"/>
</dbReference>
<dbReference type="InterPro" id="IPR014140">
    <property type="entry name" value="DNA_helicase_suAddB"/>
</dbReference>
<dbReference type="InterPro" id="IPR027417">
    <property type="entry name" value="P-loop_NTPase"/>
</dbReference>
<dbReference type="InterPro" id="IPR011604">
    <property type="entry name" value="PDDEXK-like_dom_sf"/>
</dbReference>
<dbReference type="InterPro" id="IPR038726">
    <property type="entry name" value="PDDEXK_AddAB-type"/>
</dbReference>
<dbReference type="NCBIfam" id="TIGR02773">
    <property type="entry name" value="addB_Gpos"/>
    <property type="match status" value="1"/>
</dbReference>
<dbReference type="PANTHER" id="PTHR30591">
    <property type="entry name" value="RECBCD ENZYME SUBUNIT RECC"/>
    <property type="match status" value="1"/>
</dbReference>
<dbReference type="PANTHER" id="PTHR30591:SF1">
    <property type="entry name" value="RECBCD ENZYME SUBUNIT RECC"/>
    <property type="match status" value="1"/>
</dbReference>
<dbReference type="Pfam" id="PF21445">
    <property type="entry name" value="ADDB_N"/>
    <property type="match status" value="1"/>
</dbReference>
<dbReference type="Pfam" id="PF12705">
    <property type="entry name" value="PDDEXK_1"/>
    <property type="match status" value="1"/>
</dbReference>
<dbReference type="SUPFAM" id="SSF52540">
    <property type="entry name" value="P-loop containing nucleoside triphosphate hydrolases"/>
    <property type="match status" value="2"/>
</dbReference>
<gene>
    <name evidence="1" type="primary">addB</name>
    <name type="ordered locus">Cphy_3424</name>
</gene>
<feature type="chain" id="PRO_0000379183" description="ATP-dependent helicase/deoxyribonuclease subunit B">
    <location>
        <begin position="1"/>
        <end position="1147"/>
    </location>
</feature>
<feature type="binding site" evidence="1">
    <location>
        <begin position="8"/>
        <end position="15"/>
    </location>
    <ligand>
        <name>ATP</name>
        <dbReference type="ChEBI" id="CHEBI:30616"/>
    </ligand>
</feature>
<feature type="binding site" evidence="1">
    <location>
        <position position="780"/>
    </location>
    <ligand>
        <name>[4Fe-4S] cluster</name>
        <dbReference type="ChEBI" id="CHEBI:49883"/>
    </ligand>
</feature>
<feature type="binding site" evidence="1">
    <location>
        <position position="1092"/>
    </location>
    <ligand>
        <name>[4Fe-4S] cluster</name>
        <dbReference type="ChEBI" id="CHEBI:49883"/>
    </ligand>
</feature>
<feature type="binding site" evidence="1">
    <location>
        <position position="1095"/>
    </location>
    <ligand>
        <name>[4Fe-4S] cluster</name>
        <dbReference type="ChEBI" id="CHEBI:49883"/>
    </ligand>
</feature>
<feature type="binding site" evidence="1">
    <location>
        <position position="1101"/>
    </location>
    <ligand>
        <name>[4Fe-4S] cluster</name>
        <dbReference type="ChEBI" id="CHEBI:49883"/>
    </ligand>
</feature>